<organism>
    <name type="scientific">Salinibacter ruber (strain DSM 13855 / M31)</name>
    <dbReference type="NCBI Taxonomy" id="309807"/>
    <lineage>
        <taxon>Bacteria</taxon>
        <taxon>Pseudomonadati</taxon>
        <taxon>Rhodothermota</taxon>
        <taxon>Rhodothermia</taxon>
        <taxon>Rhodothermales</taxon>
        <taxon>Salinibacteraceae</taxon>
        <taxon>Salinibacter</taxon>
    </lineage>
</organism>
<protein>
    <recommendedName>
        <fullName evidence="1">Imidazole glycerol phosphate synthase subunit HisF</fullName>
        <ecNumber evidence="1">4.3.2.10</ecNumber>
    </recommendedName>
    <alternativeName>
        <fullName evidence="1">IGP synthase cyclase subunit</fullName>
    </alternativeName>
    <alternativeName>
        <fullName evidence="1">IGP synthase subunit HisF</fullName>
    </alternativeName>
    <alternativeName>
        <fullName evidence="1">ImGP synthase subunit HisF</fullName>
        <shortName evidence="1">IGPS subunit HisF</shortName>
    </alternativeName>
</protein>
<proteinExistence type="inferred from homology"/>
<name>HIS6_SALRD</name>
<evidence type="ECO:0000255" key="1">
    <source>
        <dbReference type="HAMAP-Rule" id="MF_01013"/>
    </source>
</evidence>
<accession>Q2S295</accession>
<reference key="1">
    <citation type="journal article" date="2005" name="Proc. Natl. Acad. Sci. U.S.A.">
        <title>The genome of Salinibacter ruber: convergence and gene exchange among hyperhalophilic bacteria and archaea.</title>
        <authorList>
            <person name="Mongodin E.F."/>
            <person name="Nelson K.E."/>
            <person name="Daugherty S."/>
            <person name="DeBoy R.T."/>
            <person name="Wister J."/>
            <person name="Khouri H."/>
            <person name="Weidman J."/>
            <person name="Walsh D.A."/>
            <person name="Papke R.T."/>
            <person name="Sanchez Perez G."/>
            <person name="Sharma A.K."/>
            <person name="Nesbo C.L."/>
            <person name="MacLeod D."/>
            <person name="Bapteste E."/>
            <person name="Doolittle W.F."/>
            <person name="Charlebois R.L."/>
            <person name="Legault B."/>
            <person name="Rodriguez-Valera F."/>
        </authorList>
    </citation>
    <scope>NUCLEOTIDE SEQUENCE [LARGE SCALE GENOMIC DNA]</scope>
    <source>
        <strain>DSM 13855 / CECT 5946 / M31</strain>
    </source>
</reference>
<feature type="chain" id="PRO_1000063139" description="Imidazole glycerol phosphate synthase subunit HisF">
    <location>
        <begin position="1"/>
        <end position="268"/>
    </location>
</feature>
<feature type="active site" evidence="1">
    <location>
        <position position="12"/>
    </location>
</feature>
<feature type="active site" evidence="1">
    <location>
        <position position="131"/>
    </location>
</feature>
<sequence>MPLAKRIIPCLDVDEGRVVKGINFVDIRDAGDPVEQARTYDAAGADELVFLDITATHEDRDIMHDVVRRTADQVFIPLTVGGGLRSVDDMRAMLQAGADKVAINSAAVKDPDLIARGADAFGDQCIVVAIDAKRRDGDGPAWEVVVHGGRKPTGRDAVEWAAEAEARGAGEILLTSMDRDGTKDGYDLALLRAVTERTQIPVIASGGAGTLEHLREGLVDGGASAVLAASIFHFREHTVEEAKDHLRDAGLPVRPALNNWTDRYAPTD</sequence>
<keyword id="KW-0028">Amino-acid biosynthesis</keyword>
<keyword id="KW-0963">Cytoplasm</keyword>
<keyword id="KW-0368">Histidine biosynthesis</keyword>
<keyword id="KW-0456">Lyase</keyword>
<keyword id="KW-1185">Reference proteome</keyword>
<comment type="function">
    <text evidence="1">IGPS catalyzes the conversion of PRFAR and glutamine to IGP, AICAR and glutamate. The HisF subunit catalyzes the cyclization activity that produces IGP and AICAR from PRFAR using the ammonia provided by the HisH subunit.</text>
</comment>
<comment type="catalytic activity">
    <reaction evidence="1">
        <text>5-[(5-phospho-1-deoxy-D-ribulos-1-ylimino)methylamino]-1-(5-phospho-beta-D-ribosyl)imidazole-4-carboxamide + L-glutamine = D-erythro-1-(imidazol-4-yl)glycerol 3-phosphate + 5-amino-1-(5-phospho-beta-D-ribosyl)imidazole-4-carboxamide + L-glutamate + H(+)</text>
        <dbReference type="Rhea" id="RHEA:24793"/>
        <dbReference type="ChEBI" id="CHEBI:15378"/>
        <dbReference type="ChEBI" id="CHEBI:29985"/>
        <dbReference type="ChEBI" id="CHEBI:58278"/>
        <dbReference type="ChEBI" id="CHEBI:58359"/>
        <dbReference type="ChEBI" id="CHEBI:58475"/>
        <dbReference type="ChEBI" id="CHEBI:58525"/>
        <dbReference type="EC" id="4.3.2.10"/>
    </reaction>
</comment>
<comment type="pathway">
    <text evidence="1">Amino-acid biosynthesis; L-histidine biosynthesis; L-histidine from 5-phospho-alpha-D-ribose 1-diphosphate: step 5/9.</text>
</comment>
<comment type="subunit">
    <text evidence="1">Heterodimer of HisH and HisF.</text>
</comment>
<comment type="subcellular location">
    <subcellularLocation>
        <location evidence="1">Cytoplasm</location>
    </subcellularLocation>
</comment>
<comment type="similarity">
    <text evidence="1">Belongs to the HisA/HisF family.</text>
</comment>
<gene>
    <name evidence="1" type="primary">hisF</name>
    <name type="ordered locus">SRU_1565</name>
</gene>
<dbReference type="EC" id="4.3.2.10" evidence="1"/>
<dbReference type="EMBL" id="CP000159">
    <property type="protein sequence ID" value="ABC45250.1"/>
    <property type="molecule type" value="Genomic_DNA"/>
</dbReference>
<dbReference type="RefSeq" id="WP_011404312.1">
    <property type="nucleotide sequence ID" value="NC_007677.1"/>
</dbReference>
<dbReference type="RefSeq" id="YP_445686.1">
    <property type="nucleotide sequence ID" value="NC_007677.1"/>
</dbReference>
<dbReference type="SMR" id="Q2S295"/>
<dbReference type="STRING" id="309807.SRU_1565"/>
<dbReference type="EnsemblBacteria" id="ABC45250">
    <property type="protein sequence ID" value="ABC45250"/>
    <property type="gene ID" value="SRU_1565"/>
</dbReference>
<dbReference type="KEGG" id="sru:SRU_1565"/>
<dbReference type="PATRIC" id="fig|309807.25.peg.1619"/>
<dbReference type="eggNOG" id="COG0107">
    <property type="taxonomic scope" value="Bacteria"/>
</dbReference>
<dbReference type="HOGENOM" id="CLU_048577_4_0_10"/>
<dbReference type="OrthoDB" id="9781903at2"/>
<dbReference type="UniPathway" id="UPA00031">
    <property type="reaction ID" value="UER00010"/>
</dbReference>
<dbReference type="Proteomes" id="UP000008674">
    <property type="component" value="Chromosome"/>
</dbReference>
<dbReference type="GO" id="GO:0005737">
    <property type="term" value="C:cytoplasm"/>
    <property type="evidence" value="ECO:0007669"/>
    <property type="project" value="UniProtKB-SubCell"/>
</dbReference>
<dbReference type="GO" id="GO:0000107">
    <property type="term" value="F:imidazoleglycerol-phosphate synthase activity"/>
    <property type="evidence" value="ECO:0007669"/>
    <property type="project" value="UniProtKB-UniRule"/>
</dbReference>
<dbReference type="GO" id="GO:0016829">
    <property type="term" value="F:lyase activity"/>
    <property type="evidence" value="ECO:0007669"/>
    <property type="project" value="UniProtKB-KW"/>
</dbReference>
<dbReference type="GO" id="GO:0000105">
    <property type="term" value="P:L-histidine biosynthetic process"/>
    <property type="evidence" value="ECO:0007669"/>
    <property type="project" value="UniProtKB-UniRule"/>
</dbReference>
<dbReference type="CDD" id="cd04731">
    <property type="entry name" value="HisF"/>
    <property type="match status" value="1"/>
</dbReference>
<dbReference type="FunFam" id="3.20.20.70:FF:000006">
    <property type="entry name" value="Imidazole glycerol phosphate synthase subunit HisF"/>
    <property type="match status" value="1"/>
</dbReference>
<dbReference type="Gene3D" id="3.20.20.70">
    <property type="entry name" value="Aldolase class I"/>
    <property type="match status" value="1"/>
</dbReference>
<dbReference type="HAMAP" id="MF_01013">
    <property type="entry name" value="HisF"/>
    <property type="match status" value="1"/>
</dbReference>
<dbReference type="InterPro" id="IPR013785">
    <property type="entry name" value="Aldolase_TIM"/>
</dbReference>
<dbReference type="InterPro" id="IPR006062">
    <property type="entry name" value="His_biosynth"/>
</dbReference>
<dbReference type="InterPro" id="IPR004651">
    <property type="entry name" value="HisF"/>
</dbReference>
<dbReference type="InterPro" id="IPR050064">
    <property type="entry name" value="IGPS_HisA/HisF"/>
</dbReference>
<dbReference type="InterPro" id="IPR011060">
    <property type="entry name" value="RibuloseP-bd_barrel"/>
</dbReference>
<dbReference type="NCBIfam" id="TIGR00735">
    <property type="entry name" value="hisF"/>
    <property type="match status" value="1"/>
</dbReference>
<dbReference type="PANTHER" id="PTHR21235:SF2">
    <property type="entry name" value="IMIDAZOLE GLYCEROL PHOSPHATE SYNTHASE HISHF"/>
    <property type="match status" value="1"/>
</dbReference>
<dbReference type="PANTHER" id="PTHR21235">
    <property type="entry name" value="IMIDAZOLE GLYCEROL PHOSPHATE SYNTHASE SUBUNIT HISF/H IGP SYNTHASE SUBUNIT HISF/H"/>
    <property type="match status" value="1"/>
</dbReference>
<dbReference type="Pfam" id="PF00977">
    <property type="entry name" value="His_biosynth"/>
    <property type="match status" value="1"/>
</dbReference>
<dbReference type="SUPFAM" id="SSF51366">
    <property type="entry name" value="Ribulose-phoshate binding barrel"/>
    <property type="match status" value="1"/>
</dbReference>